<reference key="1">
    <citation type="journal article" date="2004" name="Nucleic Acids Res.">
        <title>The genome sequence of Bacillus cereus ATCC 10987 reveals metabolic adaptations and a large plasmid related to Bacillus anthracis pXO1.</title>
        <authorList>
            <person name="Rasko D.A."/>
            <person name="Ravel J."/>
            <person name="Oekstad O.A."/>
            <person name="Helgason E."/>
            <person name="Cer R.Z."/>
            <person name="Jiang L."/>
            <person name="Shores K.A."/>
            <person name="Fouts D.E."/>
            <person name="Tourasse N.J."/>
            <person name="Angiuoli S.V."/>
            <person name="Kolonay J.F."/>
            <person name="Nelson W.C."/>
            <person name="Kolstoe A.-B."/>
            <person name="Fraser C.M."/>
            <person name="Read T.D."/>
        </authorList>
    </citation>
    <scope>NUCLEOTIDE SEQUENCE [LARGE SCALE GENOMIC DNA]</scope>
    <source>
        <strain>ATCC 10987 / NRS 248</strain>
    </source>
</reference>
<evidence type="ECO:0000255" key="1">
    <source>
        <dbReference type="HAMAP-Rule" id="MF_01710"/>
    </source>
</evidence>
<dbReference type="EC" id="7.-.-.-" evidence="1"/>
<dbReference type="EMBL" id="AE017194">
    <property type="protein sequence ID" value="AAS39075.1"/>
    <property type="molecule type" value="Genomic_DNA"/>
</dbReference>
<dbReference type="SMR" id="Q73F67"/>
<dbReference type="KEGG" id="bca:BCE_0139"/>
<dbReference type="HOGENOM" id="CLU_000604_1_22_9"/>
<dbReference type="Proteomes" id="UP000002527">
    <property type="component" value="Chromosome"/>
</dbReference>
<dbReference type="GO" id="GO:0043190">
    <property type="term" value="C:ATP-binding cassette (ABC) transporter complex"/>
    <property type="evidence" value="ECO:0007669"/>
    <property type="project" value="TreeGrafter"/>
</dbReference>
<dbReference type="GO" id="GO:0005524">
    <property type="term" value="F:ATP binding"/>
    <property type="evidence" value="ECO:0007669"/>
    <property type="project" value="UniProtKB-KW"/>
</dbReference>
<dbReference type="GO" id="GO:0016887">
    <property type="term" value="F:ATP hydrolysis activity"/>
    <property type="evidence" value="ECO:0007669"/>
    <property type="project" value="InterPro"/>
</dbReference>
<dbReference type="GO" id="GO:0042626">
    <property type="term" value="F:ATPase-coupled transmembrane transporter activity"/>
    <property type="evidence" value="ECO:0007669"/>
    <property type="project" value="TreeGrafter"/>
</dbReference>
<dbReference type="CDD" id="cd03225">
    <property type="entry name" value="ABC_cobalt_CbiO_domain1"/>
    <property type="match status" value="1"/>
</dbReference>
<dbReference type="FunFam" id="3.40.50.300:FF:000224">
    <property type="entry name" value="Energy-coupling factor transporter ATP-binding protein EcfA"/>
    <property type="match status" value="1"/>
</dbReference>
<dbReference type="Gene3D" id="3.40.50.300">
    <property type="entry name" value="P-loop containing nucleotide triphosphate hydrolases"/>
    <property type="match status" value="1"/>
</dbReference>
<dbReference type="InterPro" id="IPR003593">
    <property type="entry name" value="AAA+_ATPase"/>
</dbReference>
<dbReference type="InterPro" id="IPR003439">
    <property type="entry name" value="ABC_transporter-like_ATP-bd"/>
</dbReference>
<dbReference type="InterPro" id="IPR017871">
    <property type="entry name" value="ABC_transporter-like_CS"/>
</dbReference>
<dbReference type="InterPro" id="IPR015856">
    <property type="entry name" value="ABC_transpr_CbiO/EcfA_su"/>
</dbReference>
<dbReference type="InterPro" id="IPR050095">
    <property type="entry name" value="ECF_ABC_transporter_ATP-bd"/>
</dbReference>
<dbReference type="InterPro" id="IPR030947">
    <property type="entry name" value="EcfA_1"/>
</dbReference>
<dbReference type="InterPro" id="IPR027417">
    <property type="entry name" value="P-loop_NTPase"/>
</dbReference>
<dbReference type="NCBIfam" id="TIGR04520">
    <property type="entry name" value="ECF_ATPase_1"/>
    <property type="match status" value="1"/>
</dbReference>
<dbReference type="NCBIfam" id="NF010156">
    <property type="entry name" value="PRK13635.1"/>
    <property type="match status" value="1"/>
</dbReference>
<dbReference type="NCBIfam" id="NF010167">
    <property type="entry name" value="PRK13648.1"/>
    <property type="match status" value="1"/>
</dbReference>
<dbReference type="PANTHER" id="PTHR43553:SF24">
    <property type="entry name" value="ENERGY-COUPLING FACTOR TRANSPORTER ATP-BINDING PROTEIN ECFA1"/>
    <property type="match status" value="1"/>
</dbReference>
<dbReference type="PANTHER" id="PTHR43553">
    <property type="entry name" value="HEAVY METAL TRANSPORTER"/>
    <property type="match status" value="1"/>
</dbReference>
<dbReference type="Pfam" id="PF00005">
    <property type="entry name" value="ABC_tran"/>
    <property type="match status" value="1"/>
</dbReference>
<dbReference type="SMART" id="SM00382">
    <property type="entry name" value="AAA"/>
    <property type="match status" value="1"/>
</dbReference>
<dbReference type="SUPFAM" id="SSF52540">
    <property type="entry name" value="P-loop containing nucleoside triphosphate hydrolases"/>
    <property type="match status" value="1"/>
</dbReference>
<dbReference type="PROSITE" id="PS00211">
    <property type="entry name" value="ABC_TRANSPORTER_1"/>
    <property type="match status" value="1"/>
</dbReference>
<dbReference type="PROSITE" id="PS50893">
    <property type="entry name" value="ABC_TRANSPORTER_2"/>
    <property type="match status" value="1"/>
</dbReference>
<dbReference type="PROSITE" id="PS51246">
    <property type="entry name" value="CBIO"/>
    <property type="match status" value="1"/>
</dbReference>
<sequence length="280" mass="31399">MKKEKLRTENISFQYPGAATYALKDVSFSLYEGEWVSVIGQNGSGKSTLAKLLNGLFLPEAGTITVNDTMVLSEETVWDVRKQIGMVFQNPDNQFVGTTVQDDVVFGLENIGMPREQMVERLDQALRLVRMEDFLNDEPHSLSGGQKQRVAIAGVLALQPSILILDEATSMLDPQGRREVVETVRQLVNEKGITVLSITHDLEEAAQSDRVIILNKGEILEEGTPEQIFKSSHMLQEIGLDVPFSVKIAELLKRNEILLQNTHLTMESLVNELWRLHSKK</sequence>
<organism>
    <name type="scientific">Bacillus cereus (strain ATCC 10987 / NRS 248)</name>
    <dbReference type="NCBI Taxonomy" id="222523"/>
    <lineage>
        <taxon>Bacteria</taxon>
        <taxon>Bacillati</taxon>
        <taxon>Bacillota</taxon>
        <taxon>Bacilli</taxon>
        <taxon>Bacillales</taxon>
        <taxon>Bacillaceae</taxon>
        <taxon>Bacillus</taxon>
        <taxon>Bacillus cereus group</taxon>
    </lineage>
</organism>
<accession>Q73F67</accession>
<comment type="function">
    <text evidence="1">ATP-binding (A) component of a common energy-coupling factor (ECF) ABC-transporter complex. Unlike classic ABC transporters this ECF transporter provides the energy necessary to transport a number of different substrates.</text>
</comment>
<comment type="subunit">
    <text evidence="1">Forms a stable energy-coupling factor (ECF) transporter complex composed of 2 membrane-embedded substrate-binding proteins (S component), 2 ATP-binding proteins (A component) and 2 transmembrane proteins (T component).</text>
</comment>
<comment type="subcellular location">
    <subcellularLocation>
        <location evidence="1">Cell membrane</location>
        <topology evidence="1">Peripheral membrane protein</topology>
    </subcellularLocation>
</comment>
<comment type="similarity">
    <text evidence="1">Belongs to the ABC transporter superfamily. Energy-coupling factor EcfA family.</text>
</comment>
<proteinExistence type="inferred from homology"/>
<gene>
    <name evidence="1" type="primary">ecfA1</name>
    <name type="synonym">cbiO1</name>
    <name type="ordered locus">BCE_0139</name>
</gene>
<name>ECFA1_BACC1</name>
<protein>
    <recommendedName>
        <fullName evidence="1">Energy-coupling factor transporter ATP-binding protein EcfA1</fullName>
        <shortName evidence="1">ECF transporter A component EcfA1</shortName>
        <ecNumber evidence="1">7.-.-.-</ecNumber>
    </recommendedName>
</protein>
<feature type="chain" id="PRO_0000091973" description="Energy-coupling factor transporter ATP-binding protein EcfA1">
    <location>
        <begin position="1"/>
        <end position="280"/>
    </location>
</feature>
<feature type="domain" description="ABC transporter" evidence="1">
    <location>
        <begin position="6"/>
        <end position="241"/>
    </location>
</feature>
<feature type="binding site" evidence="1">
    <location>
        <begin position="40"/>
        <end position="47"/>
    </location>
    <ligand>
        <name>ATP</name>
        <dbReference type="ChEBI" id="CHEBI:30616"/>
    </ligand>
</feature>
<keyword id="KW-0067">ATP-binding</keyword>
<keyword id="KW-1003">Cell membrane</keyword>
<keyword id="KW-0472">Membrane</keyword>
<keyword id="KW-0547">Nucleotide-binding</keyword>
<keyword id="KW-1278">Translocase</keyword>
<keyword id="KW-0813">Transport</keyword>